<name>ACSA_SHESA</name>
<protein>
    <recommendedName>
        <fullName evidence="1">Acetyl-coenzyme A synthetase</fullName>
        <shortName evidence="1">AcCoA synthetase</shortName>
        <shortName evidence="1">Acs</shortName>
        <ecNumber evidence="1">6.2.1.1</ecNumber>
    </recommendedName>
    <alternativeName>
        <fullName evidence="1">Acetate--CoA ligase</fullName>
    </alternativeName>
    <alternativeName>
        <fullName evidence="1">Acyl-activating enzyme</fullName>
    </alternativeName>
</protein>
<dbReference type="EC" id="6.2.1.1" evidence="1"/>
<dbReference type="EMBL" id="CP000469">
    <property type="protein sequence ID" value="ABK48752.1"/>
    <property type="molecule type" value="Genomic_DNA"/>
</dbReference>
<dbReference type="RefSeq" id="WP_011717439.1">
    <property type="nucleotide sequence ID" value="NC_008577.1"/>
</dbReference>
<dbReference type="SMR" id="A0KY83"/>
<dbReference type="STRING" id="94122.Shewana3_2523"/>
<dbReference type="KEGG" id="shn:Shewana3_2523"/>
<dbReference type="eggNOG" id="COG0365">
    <property type="taxonomic scope" value="Bacteria"/>
</dbReference>
<dbReference type="HOGENOM" id="CLU_000022_3_6_6"/>
<dbReference type="OrthoDB" id="9803968at2"/>
<dbReference type="Proteomes" id="UP000002589">
    <property type="component" value="Chromosome"/>
</dbReference>
<dbReference type="GO" id="GO:0005829">
    <property type="term" value="C:cytosol"/>
    <property type="evidence" value="ECO:0007669"/>
    <property type="project" value="TreeGrafter"/>
</dbReference>
<dbReference type="GO" id="GO:0003987">
    <property type="term" value="F:acetate-CoA ligase activity"/>
    <property type="evidence" value="ECO:0007669"/>
    <property type="project" value="UniProtKB-UniRule"/>
</dbReference>
<dbReference type="GO" id="GO:0016208">
    <property type="term" value="F:AMP binding"/>
    <property type="evidence" value="ECO:0007669"/>
    <property type="project" value="InterPro"/>
</dbReference>
<dbReference type="GO" id="GO:0005524">
    <property type="term" value="F:ATP binding"/>
    <property type="evidence" value="ECO:0007669"/>
    <property type="project" value="UniProtKB-KW"/>
</dbReference>
<dbReference type="GO" id="GO:0046872">
    <property type="term" value="F:metal ion binding"/>
    <property type="evidence" value="ECO:0007669"/>
    <property type="project" value="UniProtKB-KW"/>
</dbReference>
<dbReference type="GO" id="GO:0019427">
    <property type="term" value="P:acetyl-CoA biosynthetic process from acetate"/>
    <property type="evidence" value="ECO:0007669"/>
    <property type="project" value="InterPro"/>
</dbReference>
<dbReference type="CDD" id="cd05966">
    <property type="entry name" value="ACS"/>
    <property type="match status" value="1"/>
</dbReference>
<dbReference type="FunFam" id="3.30.300.30:FF:000004">
    <property type="entry name" value="Acetyl-coenzyme A synthetase"/>
    <property type="match status" value="1"/>
</dbReference>
<dbReference type="FunFam" id="3.40.50.12780:FF:000001">
    <property type="entry name" value="Acetyl-coenzyme A synthetase"/>
    <property type="match status" value="1"/>
</dbReference>
<dbReference type="Gene3D" id="3.30.300.30">
    <property type="match status" value="1"/>
</dbReference>
<dbReference type="Gene3D" id="3.40.50.12780">
    <property type="entry name" value="N-terminal domain of ligase-like"/>
    <property type="match status" value="1"/>
</dbReference>
<dbReference type="HAMAP" id="MF_01123">
    <property type="entry name" value="Ac_CoA_synth"/>
    <property type="match status" value="1"/>
</dbReference>
<dbReference type="InterPro" id="IPR011904">
    <property type="entry name" value="Ac_CoA_lig"/>
</dbReference>
<dbReference type="InterPro" id="IPR032387">
    <property type="entry name" value="ACAS_N"/>
</dbReference>
<dbReference type="InterPro" id="IPR025110">
    <property type="entry name" value="AMP-bd_C"/>
</dbReference>
<dbReference type="InterPro" id="IPR045851">
    <property type="entry name" value="AMP-bd_C_sf"/>
</dbReference>
<dbReference type="InterPro" id="IPR020845">
    <property type="entry name" value="AMP-binding_CS"/>
</dbReference>
<dbReference type="InterPro" id="IPR000873">
    <property type="entry name" value="AMP-dep_synth/lig_dom"/>
</dbReference>
<dbReference type="InterPro" id="IPR042099">
    <property type="entry name" value="ANL_N_sf"/>
</dbReference>
<dbReference type="NCBIfam" id="TIGR02188">
    <property type="entry name" value="Ac_CoA_lig_AcsA"/>
    <property type="match status" value="1"/>
</dbReference>
<dbReference type="NCBIfam" id="NF001208">
    <property type="entry name" value="PRK00174.1"/>
    <property type="match status" value="1"/>
</dbReference>
<dbReference type="PANTHER" id="PTHR24095">
    <property type="entry name" value="ACETYL-COENZYME A SYNTHETASE"/>
    <property type="match status" value="1"/>
</dbReference>
<dbReference type="PANTHER" id="PTHR24095:SF243">
    <property type="entry name" value="ACETYL-COENZYME A SYNTHETASE"/>
    <property type="match status" value="1"/>
</dbReference>
<dbReference type="Pfam" id="PF16177">
    <property type="entry name" value="ACAS_N"/>
    <property type="match status" value="1"/>
</dbReference>
<dbReference type="Pfam" id="PF00501">
    <property type="entry name" value="AMP-binding"/>
    <property type="match status" value="1"/>
</dbReference>
<dbReference type="Pfam" id="PF13193">
    <property type="entry name" value="AMP-binding_C"/>
    <property type="match status" value="1"/>
</dbReference>
<dbReference type="SUPFAM" id="SSF56801">
    <property type="entry name" value="Acetyl-CoA synthetase-like"/>
    <property type="match status" value="1"/>
</dbReference>
<dbReference type="PROSITE" id="PS00455">
    <property type="entry name" value="AMP_BINDING"/>
    <property type="match status" value="1"/>
</dbReference>
<keyword id="KW-0007">Acetylation</keyword>
<keyword id="KW-0067">ATP-binding</keyword>
<keyword id="KW-0436">Ligase</keyword>
<keyword id="KW-0460">Magnesium</keyword>
<keyword id="KW-0479">Metal-binding</keyword>
<keyword id="KW-0547">Nucleotide-binding</keyword>
<accession>A0KY83</accession>
<organism>
    <name type="scientific">Shewanella sp. (strain ANA-3)</name>
    <dbReference type="NCBI Taxonomy" id="94122"/>
    <lineage>
        <taxon>Bacteria</taxon>
        <taxon>Pseudomonadati</taxon>
        <taxon>Pseudomonadota</taxon>
        <taxon>Gammaproteobacteria</taxon>
        <taxon>Alteromonadales</taxon>
        <taxon>Shewanellaceae</taxon>
        <taxon>Shewanella</taxon>
    </lineage>
</organism>
<comment type="function">
    <text evidence="1">Catalyzes the conversion of acetate into acetyl-CoA (AcCoA), an essential intermediate at the junction of anabolic and catabolic pathways. AcsA undergoes a two-step reaction. In the first half reaction, AcsA combines acetate with ATP to form acetyl-adenylate (AcAMP) intermediate. In the second half reaction, it can then transfer the acetyl group from AcAMP to the sulfhydryl group of CoA, forming the product AcCoA.</text>
</comment>
<comment type="catalytic activity">
    <reaction evidence="1">
        <text>acetate + ATP + CoA = acetyl-CoA + AMP + diphosphate</text>
        <dbReference type="Rhea" id="RHEA:23176"/>
        <dbReference type="ChEBI" id="CHEBI:30089"/>
        <dbReference type="ChEBI" id="CHEBI:30616"/>
        <dbReference type="ChEBI" id="CHEBI:33019"/>
        <dbReference type="ChEBI" id="CHEBI:57287"/>
        <dbReference type="ChEBI" id="CHEBI:57288"/>
        <dbReference type="ChEBI" id="CHEBI:456215"/>
        <dbReference type="EC" id="6.2.1.1"/>
    </reaction>
</comment>
<comment type="cofactor">
    <cofactor evidence="1">
        <name>Mg(2+)</name>
        <dbReference type="ChEBI" id="CHEBI:18420"/>
    </cofactor>
</comment>
<comment type="PTM">
    <text evidence="1">Acetylated. Deacetylation by the SIR2-homolog deacetylase activates the enzyme.</text>
</comment>
<comment type="similarity">
    <text evidence="1">Belongs to the ATP-dependent AMP-binding enzyme family.</text>
</comment>
<feature type="chain" id="PRO_1000065322" description="Acetyl-coenzyme A synthetase">
    <location>
        <begin position="1"/>
        <end position="650"/>
    </location>
</feature>
<feature type="binding site" evidence="1">
    <location>
        <begin position="191"/>
        <end position="194"/>
    </location>
    <ligand>
        <name>CoA</name>
        <dbReference type="ChEBI" id="CHEBI:57287"/>
    </ligand>
</feature>
<feature type="binding site" evidence="1">
    <location>
        <position position="311"/>
    </location>
    <ligand>
        <name>CoA</name>
        <dbReference type="ChEBI" id="CHEBI:57287"/>
    </ligand>
</feature>
<feature type="binding site" evidence="1">
    <location>
        <position position="335"/>
    </location>
    <ligand>
        <name>CoA</name>
        <dbReference type="ChEBI" id="CHEBI:57287"/>
    </ligand>
</feature>
<feature type="binding site" evidence="1">
    <location>
        <begin position="387"/>
        <end position="389"/>
    </location>
    <ligand>
        <name>ATP</name>
        <dbReference type="ChEBI" id="CHEBI:30616"/>
    </ligand>
</feature>
<feature type="binding site" evidence="1">
    <location>
        <begin position="411"/>
        <end position="416"/>
    </location>
    <ligand>
        <name>ATP</name>
        <dbReference type="ChEBI" id="CHEBI:30616"/>
    </ligand>
</feature>
<feature type="binding site" evidence="1">
    <location>
        <position position="500"/>
    </location>
    <ligand>
        <name>ATP</name>
        <dbReference type="ChEBI" id="CHEBI:30616"/>
    </ligand>
</feature>
<feature type="binding site" evidence="1">
    <location>
        <position position="515"/>
    </location>
    <ligand>
        <name>ATP</name>
        <dbReference type="ChEBI" id="CHEBI:30616"/>
    </ligand>
</feature>
<feature type="binding site" evidence="1">
    <location>
        <position position="523"/>
    </location>
    <ligand>
        <name>CoA</name>
        <dbReference type="ChEBI" id="CHEBI:57287"/>
    </ligand>
</feature>
<feature type="binding site" evidence="1">
    <location>
        <position position="526"/>
    </location>
    <ligand>
        <name>ATP</name>
        <dbReference type="ChEBI" id="CHEBI:30616"/>
    </ligand>
</feature>
<feature type="binding site" evidence="1">
    <location>
        <position position="537"/>
    </location>
    <ligand>
        <name>Mg(2+)</name>
        <dbReference type="ChEBI" id="CHEBI:18420"/>
    </ligand>
</feature>
<feature type="binding site" evidence="1">
    <location>
        <position position="539"/>
    </location>
    <ligand>
        <name>Mg(2+)</name>
        <dbReference type="ChEBI" id="CHEBI:18420"/>
    </ligand>
</feature>
<feature type="binding site" evidence="1">
    <location>
        <position position="542"/>
    </location>
    <ligand>
        <name>Mg(2+)</name>
        <dbReference type="ChEBI" id="CHEBI:18420"/>
    </ligand>
</feature>
<feature type="binding site" evidence="1">
    <location>
        <position position="584"/>
    </location>
    <ligand>
        <name>CoA</name>
        <dbReference type="ChEBI" id="CHEBI:57287"/>
    </ligand>
</feature>
<feature type="modified residue" description="N6-acetyllysine" evidence="1">
    <location>
        <position position="609"/>
    </location>
</feature>
<proteinExistence type="inferred from homology"/>
<gene>
    <name evidence="1" type="primary">acsA</name>
    <name type="ordered locus">Shewana3_2523</name>
</gene>
<sequence length="650" mass="72411">MSSQSLYKVSGNIAANALVNNDQYKKMYQESIVNPEGFWREHGKRIDWIKPYTKIKKTTFDDHNLSINWFYDGTLNASANCLDRHLAEHSDRVAIIWEGDNASEQRQITYGELHTQVCKFANALRSQGVRRGDIVTIYMPMVPEAAVAMLACARIGAVHSVVFGGFSPDSIASRVIDGKSKVVITADEGMRGGRAIPLKRNIDDALKHPDVTSVEKVIVLKRTGGKVDWVEGRDVWWHSLVETASEHCAIEEMGAEDPLFLLYTSGSTGNPKGVLHTTGGYMVYASMTHEYVFDYKPGEIYWCTADVGWITGHSYMVYGPLANGATVLIHEGIPNYPSPARLGEMIDRHKVNILYTAPTLIRALMAEGKQHFDKYDGSSLRIMGSVGEPINPEAWRWYHEVIGHEHCPIVDTWWQTETGGILITPLPGATDTKPGSATRPFFGVQPALVDNMGNILEGATEGNLVLLDSWPGQMRTVYGDHERFVLTYFKTFRGMYFTGDGARRDEDGYYWITGRVDDVINVSGHRLGTAEVESALVSHELVAEAAVVGYPHDIKGQGIYAYVTLTRGTEESEELRQELRQWVRKEIGALATPDLIQWATGLPKTRSGKIMRRFLRKIAANEVTNLGDASTLADPAVIETLIETRLNRNE</sequence>
<evidence type="ECO:0000255" key="1">
    <source>
        <dbReference type="HAMAP-Rule" id="MF_01123"/>
    </source>
</evidence>
<reference key="1">
    <citation type="submission" date="2006-09" db="EMBL/GenBank/DDBJ databases">
        <title>Complete sequence of chromosome 1 of Shewanella sp. ANA-3.</title>
        <authorList>
            <person name="Copeland A."/>
            <person name="Lucas S."/>
            <person name="Lapidus A."/>
            <person name="Barry K."/>
            <person name="Detter J.C."/>
            <person name="Glavina del Rio T."/>
            <person name="Hammon N."/>
            <person name="Israni S."/>
            <person name="Dalin E."/>
            <person name="Tice H."/>
            <person name="Pitluck S."/>
            <person name="Chertkov O."/>
            <person name="Brettin T."/>
            <person name="Bruce D."/>
            <person name="Han C."/>
            <person name="Tapia R."/>
            <person name="Gilna P."/>
            <person name="Schmutz J."/>
            <person name="Larimer F."/>
            <person name="Land M."/>
            <person name="Hauser L."/>
            <person name="Kyrpides N."/>
            <person name="Kim E."/>
            <person name="Newman D."/>
            <person name="Salticov C."/>
            <person name="Konstantinidis K."/>
            <person name="Klappenback J."/>
            <person name="Tiedje J."/>
            <person name="Richardson P."/>
        </authorList>
    </citation>
    <scope>NUCLEOTIDE SEQUENCE [LARGE SCALE GENOMIC DNA]</scope>
    <source>
        <strain>ANA-3</strain>
    </source>
</reference>